<organism>
    <name type="scientific">Parabacteroides distasonis (strain ATCC 8503 / DSM 20701 / CIP 104284 / JCM 5825 / NCTC 11152)</name>
    <dbReference type="NCBI Taxonomy" id="435591"/>
    <lineage>
        <taxon>Bacteria</taxon>
        <taxon>Pseudomonadati</taxon>
        <taxon>Bacteroidota</taxon>
        <taxon>Bacteroidia</taxon>
        <taxon>Bacteroidales</taxon>
        <taxon>Tannerellaceae</taxon>
        <taxon>Parabacteroides</taxon>
    </lineage>
</organism>
<feature type="chain" id="PRO_1000043715" description="GTP cyclohydrolase 1">
    <location>
        <begin position="1"/>
        <end position="196"/>
    </location>
</feature>
<feature type="binding site" evidence="2">
    <location>
        <position position="86"/>
    </location>
    <ligand>
        <name>Zn(2+)</name>
        <dbReference type="ChEBI" id="CHEBI:29105"/>
    </ligand>
</feature>
<feature type="binding site" evidence="2">
    <location>
        <position position="89"/>
    </location>
    <ligand>
        <name>Zn(2+)</name>
        <dbReference type="ChEBI" id="CHEBI:29105"/>
    </ligand>
</feature>
<feature type="binding site" evidence="2">
    <location>
        <position position="157"/>
    </location>
    <ligand>
        <name>Zn(2+)</name>
        <dbReference type="ChEBI" id="CHEBI:29105"/>
    </ligand>
</feature>
<comment type="catalytic activity">
    <reaction evidence="2">
        <text>GTP + H2O = 7,8-dihydroneopterin 3'-triphosphate + formate + H(+)</text>
        <dbReference type="Rhea" id="RHEA:17473"/>
        <dbReference type="ChEBI" id="CHEBI:15377"/>
        <dbReference type="ChEBI" id="CHEBI:15378"/>
        <dbReference type="ChEBI" id="CHEBI:15740"/>
        <dbReference type="ChEBI" id="CHEBI:37565"/>
        <dbReference type="ChEBI" id="CHEBI:58462"/>
        <dbReference type="EC" id="3.5.4.16"/>
    </reaction>
</comment>
<comment type="pathway">
    <text evidence="2">Cofactor biosynthesis; 7,8-dihydroneopterin triphosphate biosynthesis; 7,8-dihydroneopterin triphosphate from GTP: step 1/1.</text>
</comment>
<comment type="subunit">
    <text evidence="1">Toroid-shaped homodecamer, composed of two pentamers of five dimers.</text>
</comment>
<comment type="similarity">
    <text evidence="2">Belongs to the GTP cyclohydrolase I family.</text>
</comment>
<reference key="1">
    <citation type="journal article" date="2007" name="PLoS Biol.">
        <title>Evolution of symbiotic bacteria in the distal human intestine.</title>
        <authorList>
            <person name="Xu J."/>
            <person name="Mahowald M.A."/>
            <person name="Ley R.E."/>
            <person name="Lozupone C.A."/>
            <person name="Hamady M."/>
            <person name="Martens E.C."/>
            <person name="Henrissat B."/>
            <person name="Coutinho P.M."/>
            <person name="Minx P."/>
            <person name="Latreille P."/>
            <person name="Cordum H."/>
            <person name="Van Brunt A."/>
            <person name="Kim K."/>
            <person name="Fulton R.S."/>
            <person name="Fulton L.A."/>
            <person name="Clifton S.W."/>
            <person name="Wilson R.K."/>
            <person name="Knight R.D."/>
            <person name="Gordon J.I."/>
        </authorList>
    </citation>
    <scope>NUCLEOTIDE SEQUENCE [LARGE SCALE GENOMIC DNA]</scope>
    <source>
        <strain>ATCC 8503 / DSM 20701 / CIP 104284 / JCM 5825 / NCTC 11152</strain>
    </source>
</reference>
<accession>A6LFE8</accession>
<sequence>MSEVNEETLRAREALAGHYKEVLGLLGEDVEREGLLKTPERVAKAMQFLTKGYHEDPEAVLRSAMFQEEDYKQMVIVKDIDFFSLCEHHMLPFFGKAHVAYIPKKYITGLSKIPRVVDIFARRLQIQERMTMQIKDCIQRTLDPLGVMVVIEAQHMCMQMRGVEKQNSLTTTSDFTGFFQQAKTREEFMNLIKHNR</sequence>
<keyword id="KW-0342">GTP-binding</keyword>
<keyword id="KW-0378">Hydrolase</keyword>
<keyword id="KW-0479">Metal-binding</keyword>
<keyword id="KW-0547">Nucleotide-binding</keyword>
<keyword id="KW-0554">One-carbon metabolism</keyword>
<keyword id="KW-1185">Reference proteome</keyword>
<keyword id="KW-0862">Zinc</keyword>
<name>GCH1_PARD8</name>
<dbReference type="EC" id="3.5.4.16" evidence="2"/>
<dbReference type="EMBL" id="CP000140">
    <property type="protein sequence ID" value="ABR44412.1"/>
    <property type="molecule type" value="Genomic_DNA"/>
</dbReference>
<dbReference type="RefSeq" id="WP_005860986.1">
    <property type="nucleotide sequence ID" value="NC_009615.1"/>
</dbReference>
<dbReference type="SMR" id="A6LFE8"/>
<dbReference type="STRING" id="435591.BDI_2693"/>
<dbReference type="PaxDb" id="435591-BDI_2693"/>
<dbReference type="KEGG" id="pdi:BDI_2693"/>
<dbReference type="eggNOG" id="COG0302">
    <property type="taxonomic scope" value="Bacteria"/>
</dbReference>
<dbReference type="HOGENOM" id="CLU_049768_3_2_10"/>
<dbReference type="BioCyc" id="PDIS435591:G1G5A-2768-MONOMER"/>
<dbReference type="UniPathway" id="UPA00848">
    <property type="reaction ID" value="UER00151"/>
</dbReference>
<dbReference type="Proteomes" id="UP000000566">
    <property type="component" value="Chromosome"/>
</dbReference>
<dbReference type="GO" id="GO:0005737">
    <property type="term" value="C:cytoplasm"/>
    <property type="evidence" value="ECO:0007669"/>
    <property type="project" value="TreeGrafter"/>
</dbReference>
<dbReference type="GO" id="GO:0005525">
    <property type="term" value="F:GTP binding"/>
    <property type="evidence" value="ECO:0007669"/>
    <property type="project" value="UniProtKB-KW"/>
</dbReference>
<dbReference type="GO" id="GO:0003934">
    <property type="term" value="F:GTP cyclohydrolase I activity"/>
    <property type="evidence" value="ECO:0007669"/>
    <property type="project" value="UniProtKB-UniRule"/>
</dbReference>
<dbReference type="GO" id="GO:0008270">
    <property type="term" value="F:zinc ion binding"/>
    <property type="evidence" value="ECO:0007669"/>
    <property type="project" value="UniProtKB-UniRule"/>
</dbReference>
<dbReference type="GO" id="GO:0006730">
    <property type="term" value="P:one-carbon metabolic process"/>
    <property type="evidence" value="ECO:0007669"/>
    <property type="project" value="UniProtKB-UniRule"/>
</dbReference>
<dbReference type="GO" id="GO:0006729">
    <property type="term" value="P:tetrahydrobiopterin biosynthetic process"/>
    <property type="evidence" value="ECO:0007669"/>
    <property type="project" value="TreeGrafter"/>
</dbReference>
<dbReference type="GO" id="GO:0046654">
    <property type="term" value="P:tetrahydrofolate biosynthetic process"/>
    <property type="evidence" value="ECO:0007669"/>
    <property type="project" value="UniProtKB-UniRule"/>
</dbReference>
<dbReference type="FunFam" id="1.10.286.10:FF:000003">
    <property type="entry name" value="GTP cyclohydrolase 1"/>
    <property type="match status" value="1"/>
</dbReference>
<dbReference type="FunFam" id="3.30.1130.10:FF:000001">
    <property type="entry name" value="GTP cyclohydrolase 1"/>
    <property type="match status" value="1"/>
</dbReference>
<dbReference type="Gene3D" id="1.10.286.10">
    <property type="match status" value="1"/>
</dbReference>
<dbReference type="Gene3D" id="3.30.1130.10">
    <property type="match status" value="1"/>
</dbReference>
<dbReference type="HAMAP" id="MF_00223">
    <property type="entry name" value="FolE"/>
    <property type="match status" value="1"/>
</dbReference>
<dbReference type="InterPro" id="IPR043133">
    <property type="entry name" value="GTP-CH-I_C/QueF"/>
</dbReference>
<dbReference type="InterPro" id="IPR043134">
    <property type="entry name" value="GTP-CH-I_N"/>
</dbReference>
<dbReference type="InterPro" id="IPR001474">
    <property type="entry name" value="GTP_CycHdrlase_I"/>
</dbReference>
<dbReference type="InterPro" id="IPR018234">
    <property type="entry name" value="GTP_CycHdrlase_I_CS"/>
</dbReference>
<dbReference type="InterPro" id="IPR020602">
    <property type="entry name" value="GTP_CycHdrlase_I_dom"/>
</dbReference>
<dbReference type="NCBIfam" id="TIGR00063">
    <property type="entry name" value="folE"/>
    <property type="match status" value="1"/>
</dbReference>
<dbReference type="NCBIfam" id="NF006825">
    <property type="entry name" value="PRK09347.1-2"/>
    <property type="match status" value="1"/>
</dbReference>
<dbReference type="NCBIfam" id="NF006826">
    <property type="entry name" value="PRK09347.1-3"/>
    <property type="match status" value="1"/>
</dbReference>
<dbReference type="PANTHER" id="PTHR11109:SF7">
    <property type="entry name" value="GTP CYCLOHYDROLASE 1"/>
    <property type="match status" value="1"/>
</dbReference>
<dbReference type="PANTHER" id="PTHR11109">
    <property type="entry name" value="GTP CYCLOHYDROLASE I"/>
    <property type="match status" value="1"/>
</dbReference>
<dbReference type="Pfam" id="PF01227">
    <property type="entry name" value="GTP_cyclohydroI"/>
    <property type="match status" value="1"/>
</dbReference>
<dbReference type="SUPFAM" id="SSF55620">
    <property type="entry name" value="Tetrahydrobiopterin biosynthesis enzymes-like"/>
    <property type="match status" value="1"/>
</dbReference>
<dbReference type="PROSITE" id="PS00859">
    <property type="entry name" value="GTP_CYCLOHYDROL_1_1"/>
    <property type="match status" value="1"/>
</dbReference>
<dbReference type="PROSITE" id="PS00860">
    <property type="entry name" value="GTP_CYCLOHYDROL_1_2"/>
    <property type="match status" value="1"/>
</dbReference>
<protein>
    <recommendedName>
        <fullName evidence="2">GTP cyclohydrolase 1</fullName>
        <ecNumber evidence="2">3.5.4.16</ecNumber>
    </recommendedName>
    <alternativeName>
        <fullName evidence="2">GTP cyclohydrolase I</fullName>
        <shortName evidence="2">GTP-CH-I</shortName>
    </alternativeName>
</protein>
<proteinExistence type="inferred from homology"/>
<evidence type="ECO:0000250" key="1"/>
<evidence type="ECO:0000255" key="2">
    <source>
        <dbReference type="HAMAP-Rule" id="MF_00223"/>
    </source>
</evidence>
<gene>
    <name evidence="2" type="primary">folE</name>
    <name type="ordered locus">BDI_2693</name>
</gene>